<evidence type="ECO:0000305" key="1"/>
<accession>B5XD90</accession>
<sequence>MAACTAQVLSLYRKLMKESNKFPSYNYRTYALRRVQDAFRANRSVEDPKMVEQLLNQGRDNLDMIRRQVAIGKMYPTQKTIVEG</sequence>
<reference key="1">
    <citation type="journal article" date="2010" name="BMC Genomics">
        <title>Salmo salar and Esox lucius full-length cDNA sequences reveal changes in evolutionary pressures on a post-tetraploidization genome.</title>
        <authorList>
            <person name="Leong J.S."/>
            <person name="Jantzen S.G."/>
            <person name="von Schalburg K.R."/>
            <person name="Cooper G.A."/>
            <person name="Messmer A.M."/>
            <person name="Liao N.Y."/>
            <person name="Munro S."/>
            <person name="Moore R."/>
            <person name="Holt R.A."/>
            <person name="Jones S.J."/>
            <person name="Davidson W.S."/>
            <person name="Koop B.F."/>
        </authorList>
    </citation>
    <scope>NUCLEOTIDE SEQUENCE [LARGE SCALE MRNA]</scope>
    <source>
        <tissue>Brain</tissue>
    </source>
</reference>
<dbReference type="EMBL" id="BT049009">
    <property type="protein sequence ID" value="ACI68810.1"/>
    <property type="molecule type" value="mRNA"/>
</dbReference>
<dbReference type="SMR" id="B5XD90"/>
<dbReference type="STRING" id="8030.ENSSSAP00000057408"/>
<dbReference type="PaxDb" id="8030-ENSSSAP00000057408"/>
<dbReference type="Ensembl" id="ENSSSAT00020013158">
    <property type="protein sequence ID" value="ENSSSAP00020012169"/>
    <property type="gene ID" value="ENSSSAG00020004787"/>
</dbReference>
<dbReference type="OrthoDB" id="275715at2759"/>
<dbReference type="Proteomes" id="UP000087266">
    <property type="component" value="Unplaced"/>
</dbReference>
<dbReference type="GO" id="GO:1990221">
    <property type="term" value="C:L-cysteine desulfurase complex"/>
    <property type="evidence" value="ECO:0007669"/>
    <property type="project" value="TreeGrafter"/>
</dbReference>
<dbReference type="GO" id="GO:0005739">
    <property type="term" value="C:mitochondrion"/>
    <property type="evidence" value="ECO:0007669"/>
    <property type="project" value="TreeGrafter"/>
</dbReference>
<dbReference type="GO" id="GO:0016226">
    <property type="term" value="P:iron-sulfur cluster assembly"/>
    <property type="evidence" value="ECO:0007669"/>
    <property type="project" value="InterPro"/>
</dbReference>
<dbReference type="CDD" id="cd20264">
    <property type="entry name" value="Complex1_LYR_LYRM4"/>
    <property type="match status" value="1"/>
</dbReference>
<dbReference type="InterPro" id="IPR008011">
    <property type="entry name" value="Complex1_LYR_dom"/>
</dbReference>
<dbReference type="InterPro" id="IPR045297">
    <property type="entry name" value="Complex1_LYR_LYRM4"/>
</dbReference>
<dbReference type="InterPro" id="IPR051522">
    <property type="entry name" value="ISC_assembly_LYR"/>
</dbReference>
<dbReference type="PANTHER" id="PTHR13166:SF7">
    <property type="entry name" value="LYR MOTIF-CONTAINING PROTEIN 4"/>
    <property type="match status" value="1"/>
</dbReference>
<dbReference type="PANTHER" id="PTHR13166">
    <property type="entry name" value="PROTEIN C6ORF149"/>
    <property type="match status" value="1"/>
</dbReference>
<dbReference type="Pfam" id="PF05347">
    <property type="entry name" value="Complex1_LYR"/>
    <property type="match status" value="1"/>
</dbReference>
<keyword id="KW-1185">Reference proteome</keyword>
<proteinExistence type="inferred from homology"/>
<comment type="similarity">
    <text evidence="1">Belongs to the complex I LYR family.</text>
</comment>
<feature type="chain" id="PRO_0000370334" description="LYR motif-containing protein 4B">
    <location>
        <begin position="1"/>
        <end position="84"/>
    </location>
</feature>
<gene>
    <name type="primary">lyrm4b</name>
</gene>
<organism>
    <name type="scientific">Salmo salar</name>
    <name type="common">Atlantic salmon</name>
    <dbReference type="NCBI Taxonomy" id="8030"/>
    <lineage>
        <taxon>Eukaryota</taxon>
        <taxon>Metazoa</taxon>
        <taxon>Chordata</taxon>
        <taxon>Craniata</taxon>
        <taxon>Vertebrata</taxon>
        <taxon>Euteleostomi</taxon>
        <taxon>Actinopterygii</taxon>
        <taxon>Neopterygii</taxon>
        <taxon>Teleostei</taxon>
        <taxon>Protacanthopterygii</taxon>
        <taxon>Salmoniformes</taxon>
        <taxon>Salmonidae</taxon>
        <taxon>Salmoninae</taxon>
        <taxon>Salmo</taxon>
    </lineage>
</organism>
<name>LYM4B_SALSA</name>
<protein>
    <recommendedName>
        <fullName>LYR motif-containing protein 4B</fullName>
    </recommendedName>
</protein>